<keyword id="KW-0349">Heme</keyword>
<keyword id="KW-0408">Iron</keyword>
<keyword id="KW-0479">Metal-binding</keyword>
<keyword id="KW-0536">Nodulation</keyword>
<keyword id="KW-0561">Oxygen transport</keyword>
<keyword id="KW-1185">Reference proteome</keyword>
<keyword id="KW-0813">Transport</keyword>
<feature type="chain" id="PRO_0000460305" description="Group 2 truncated hemoglobin 3-1">
    <location>
        <begin position="1"/>
        <end position="170"/>
    </location>
</feature>
<feature type="binding site" description="proximal binding residue" evidence="2">
    <location>
        <position position="98"/>
    </location>
    <ligand>
        <name>heme b</name>
        <dbReference type="ChEBI" id="CHEBI:60344"/>
    </ligand>
    <ligandPart>
        <name>Fe</name>
        <dbReference type="ChEBI" id="CHEBI:18248"/>
    </ligandPart>
</feature>
<organism>
    <name type="scientific">Medicago truncatula</name>
    <name type="common">Barrel medic</name>
    <name type="synonym">Medicago tribuloides</name>
    <dbReference type="NCBI Taxonomy" id="3880"/>
    <lineage>
        <taxon>Eukaryota</taxon>
        <taxon>Viridiplantae</taxon>
        <taxon>Streptophyta</taxon>
        <taxon>Embryophyta</taxon>
        <taxon>Tracheophyta</taxon>
        <taxon>Spermatophyta</taxon>
        <taxon>Magnoliopsida</taxon>
        <taxon>eudicotyledons</taxon>
        <taxon>Gunneridae</taxon>
        <taxon>Pentapetalae</taxon>
        <taxon>rosids</taxon>
        <taxon>fabids</taxon>
        <taxon>Fabales</taxon>
        <taxon>Fabaceae</taxon>
        <taxon>Papilionoideae</taxon>
        <taxon>50 kb inversion clade</taxon>
        <taxon>NPAAA clade</taxon>
        <taxon>Hologalegina</taxon>
        <taxon>IRL clade</taxon>
        <taxon>Trifolieae</taxon>
        <taxon>Medicago</taxon>
    </lineage>
</organism>
<sequence>MQNLQEKASEWSGVETNHAFAIDDTNLFQKLGLQTFINLSTNFYNRVYVDDEEWFRSIFAKSDKDKAIQNQYEFLVQRMGGPPLYSQRRGHPALIARHRPFPVTHEAAERWLLHMQQALDNISDIDHDSKIMLMNFFRHTAYFLVAGVEQKNQSLHPCKDADGRHPCKNF</sequence>
<name>GLB31_MEDTR</name>
<gene>
    <name evidence="4" type="primary">GLB3-1</name>
    <name evidence="7" type="ordered locus">MTR_3g109420</name>
    <name evidence="4" type="ordered locus">Medtr3g109420</name>
    <name evidence="8" type="ordered locus">MtrunA17_Chr3g0139391</name>
</gene>
<dbReference type="EMBL" id="CM001219">
    <property type="protein sequence ID" value="AES73843.1"/>
    <property type="molecule type" value="Genomic_DNA"/>
</dbReference>
<dbReference type="EMBL" id="PSQE01000003">
    <property type="protein sequence ID" value="RHN70799.1"/>
    <property type="molecule type" value="Genomic_DNA"/>
</dbReference>
<dbReference type="SMR" id="G7J2X4"/>
<dbReference type="STRING" id="3880.G7J2X4"/>
<dbReference type="PaxDb" id="3880-AES73843"/>
<dbReference type="EnsemblPlants" id="rna19416">
    <property type="protein sequence ID" value="RHN70799.1"/>
    <property type="gene ID" value="gene19416"/>
</dbReference>
<dbReference type="GeneID" id="11428859"/>
<dbReference type="Gramene" id="rna19416">
    <property type="protein sequence ID" value="RHN70799.1"/>
    <property type="gene ID" value="gene19416"/>
</dbReference>
<dbReference type="KEGG" id="mtr:11428859"/>
<dbReference type="eggNOG" id="ENOG502QRXE">
    <property type="taxonomic scope" value="Eukaryota"/>
</dbReference>
<dbReference type="HOGENOM" id="CLU_103526_0_0_1"/>
<dbReference type="OMA" id="INFFRHT"/>
<dbReference type="OrthoDB" id="1856542at2759"/>
<dbReference type="Proteomes" id="UP000002051">
    <property type="component" value="Chromosome 3"/>
</dbReference>
<dbReference type="Proteomes" id="UP000265566">
    <property type="component" value="Chromosome 3"/>
</dbReference>
<dbReference type="GO" id="GO:0020037">
    <property type="term" value="F:heme binding"/>
    <property type="evidence" value="ECO:0007669"/>
    <property type="project" value="InterPro"/>
</dbReference>
<dbReference type="GO" id="GO:0046872">
    <property type="term" value="F:metal ion binding"/>
    <property type="evidence" value="ECO:0007669"/>
    <property type="project" value="UniProtKB-KW"/>
</dbReference>
<dbReference type="GO" id="GO:0019825">
    <property type="term" value="F:oxygen binding"/>
    <property type="evidence" value="ECO:0007669"/>
    <property type="project" value="InterPro"/>
</dbReference>
<dbReference type="GO" id="GO:0005344">
    <property type="term" value="F:oxygen carrier activity"/>
    <property type="evidence" value="ECO:0007669"/>
    <property type="project" value="UniProtKB-KW"/>
</dbReference>
<dbReference type="GO" id="GO:0009877">
    <property type="term" value="P:nodulation"/>
    <property type="evidence" value="ECO:0007669"/>
    <property type="project" value="UniProtKB-KW"/>
</dbReference>
<dbReference type="GO" id="GO:0071731">
    <property type="term" value="P:response to nitric oxide"/>
    <property type="evidence" value="ECO:0000270"/>
    <property type="project" value="UniProtKB"/>
</dbReference>
<dbReference type="CDD" id="cd19755">
    <property type="entry name" value="TrHb2_AtGlb3-like_O"/>
    <property type="match status" value="1"/>
</dbReference>
<dbReference type="Gene3D" id="1.10.490.10">
    <property type="entry name" value="Globins"/>
    <property type="match status" value="1"/>
</dbReference>
<dbReference type="InterPro" id="IPR044203">
    <property type="entry name" value="GlbO/GLB3-like"/>
</dbReference>
<dbReference type="InterPro" id="IPR009050">
    <property type="entry name" value="Globin-like_sf"/>
</dbReference>
<dbReference type="InterPro" id="IPR012292">
    <property type="entry name" value="Globin/Proto"/>
</dbReference>
<dbReference type="InterPro" id="IPR001486">
    <property type="entry name" value="Hemoglobin_trunc"/>
</dbReference>
<dbReference type="PANTHER" id="PTHR47366">
    <property type="entry name" value="TWO-ON-TWO HEMOGLOBIN-3"/>
    <property type="match status" value="1"/>
</dbReference>
<dbReference type="PANTHER" id="PTHR47366:SF1">
    <property type="entry name" value="TWO-ON-TWO HEMOGLOBIN-3"/>
    <property type="match status" value="1"/>
</dbReference>
<dbReference type="Pfam" id="PF01152">
    <property type="entry name" value="Bac_globin"/>
    <property type="match status" value="1"/>
</dbReference>
<dbReference type="SUPFAM" id="SSF46458">
    <property type="entry name" value="Globin-like"/>
    <property type="match status" value="1"/>
</dbReference>
<protein>
    <recommendedName>
        <fullName evidence="6">Group 2 truncated hemoglobin 3-1</fullName>
        <shortName evidence="4">MtGlb3-1</shortName>
    </recommendedName>
    <alternativeName>
        <fullName evidence="6">Phytoglobin 3.1</fullName>
        <shortName evidence="6">Phytogb3.1</shortName>
    </alternativeName>
    <alternativeName>
        <fullName evidence="6">Two-on-two hemoglobin 3-1</fullName>
        <shortName evidence="6">2-on-2 hemoglobin 3-1</shortName>
    </alternativeName>
</protein>
<evidence type="ECO:0000250" key="1">
    <source>
        <dbReference type="UniProtKB" id="I3SAV1"/>
    </source>
</evidence>
<evidence type="ECO:0000250" key="2">
    <source>
        <dbReference type="UniProtKB" id="Q67XG0"/>
    </source>
</evidence>
<evidence type="ECO:0000269" key="3">
    <source>
    </source>
</evidence>
<evidence type="ECO:0000303" key="4">
    <source>
    </source>
</evidence>
<evidence type="ECO:0000305" key="5"/>
<evidence type="ECO:0000305" key="6">
    <source>
    </source>
</evidence>
<evidence type="ECO:0000312" key="7">
    <source>
        <dbReference type="EMBL" id="AES73843.1"/>
    </source>
</evidence>
<evidence type="ECO:0000312" key="8">
    <source>
        <dbReference type="EMBL" id="RHN70799.1"/>
    </source>
</evidence>
<accession>G7J2X4</accession>
<reference key="1">
    <citation type="journal article" date="2011" name="Nature">
        <title>The Medicago genome provides insight into the evolution of rhizobial symbioses.</title>
        <authorList>
            <person name="Young N.D."/>
            <person name="Debelle F."/>
            <person name="Oldroyd G.E.D."/>
            <person name="Geurts R."/>
            <person name="Cannon S.B."/>
            <person name="Udvardi M.K."/>
            <person name="Benedito V.A."/>
            <person name="Mayer K.F.X."/>
            <person name="Gouzy J."/>
            <person name="Schoof H."/>
            <person name="Van de Peer Y."/>
            <person name="Proost S."/>
            <person name="Cook D.R."/>
            <person name="Meyers B.C."/>
            <person name="Spannagl M."/>
            <person name="Cheung F."/>
            <person name="De Mita S."/>
            <person name="Krishnakumar V."/>
            <person name="Gundlach H."/>
            <person name="Zhou S."/>
            <person name="Mudge J."/>
            <person name="Bharti A.K."/>
            <person name="Murray J.D."/>
            <person name="Naoumkina M.A."/>
            <person name="Rosen B."/>
            <person name="Silverstein K.A.T."/>
            <person name="Tang H."/>
            <person name="Rombauts S."/>
            <person name="Zhao P.X."/>
            <person name="Zhou P."/>
            <person name="Barbe V."/>
            <person name="Bardou P."/>
            <person name="Bechner M."/>
            <person name="Bellec A."/>
            <person name="Berger A."/>
            <person name="Berges H."/>
            <person name="Bidwell S."/>
            <person name="Bisseling T."/>
            <person name="Choisne N."/>
            <person name="Couloux A."/>
            <person name="Denny R."/>
            <person name="Deshpande S."/>
            <person name="Dai X."/>
            <person name="Doyle J.J."/>
            <person name="Dudez A.-M."/>
            <person name="Farmer A.D."/>
            <person name="Fouteau S."/>
            <person name="Franken C."/>
            <person name="Gibelin C."/>
            <person name="Gish J."/>
            <person name="Goldstein S."/>
            <person name="Gonzalez A.J."/>
            <person name="Green P.J."/>
            <person name="Hallab A."/>
            <person name="Hartog M."/>
            <person name="Hua A."/>
            <person name="Humphray S.J."/>
            <person name="Jeong D.-H."/>
            <person name="Jing Y."/>
            <person name="Jocker A."/>
            <person name="Kenton S.M."/>
            <person name="Kim D.-J."/>
            <person name="Klee K."/>
            <person name="Lai H."/>
            <person name="Lang C."/>
            <person name="Lin S."/>
            <person name="Macmil S.L."/>
            <person name="Magdelenat G."/>
            <person name="Matthews L."/>
            <person name="McCorrison J."/>
            <person name="Monaghan E.L."/>
            <person name="Mun J.-H."/>
            <person name="Najar F.Z."/>
            <person name="Nicholson C."/>
            <person name="Noirot C."/>
            <person name="O'Bleness M."/>
            <person name="Paule C.R."/>
            <person name="Poulain J."/>
            <person name="Prion F."/>
            <person name="Qin B."/>
            <person name="Qu C."/>
            <person name="Retzel E.F."/>
            <person name="Riddle C."/>
            <person name="Sallet E."/>
            <person name="Samain S."/>
            <person name="Samson N."/>
            <person name="Sanders I."/>
            <person name="Saurat O."/>
            <person name="Scarpelli C."/>
            <person name="Schiex T."/>
            <person name="Segurens B."/>
            <person name="Severin A.J."/>
            <person name="Sherrier D.J."/>
            <person name="Shi R."/>
            <person name="Sims S."/>
            <person name="Singer S.R."/>
            <person name="Sinharoy S."/>
            <person name="Sterck L."/>
            <person name="Viollet A."/>
            <person name="Wang B.-B."/>
            <person name="Wang K."/>
            <person name="Wang M."/>
            <person name="Wang X."/>
            <person name="Warfsmann J."/>
            <person name="Weissenbach J."/>
            <person name="White D.D."/>
            <person name="White J.D."/>
            <person name="Wiley G.B."/>
            <person name="Wincker P."/>
            <person name="Xing Y."/>
            <person name="Yang L."/>
            <person name="Yao Z."/>
            <person name="Ying F."/>
            <person name="Zhai J."/>
            <person name="Zhou L."/>
            <person name="Zuber A."/>
            <person name="Denarie J."/>
            <person name="Dixon R.A."/>
            <person name="May G.D."/>
            <person name="Schwartz D.C."/>
            <person name="Rogers J."/>
            <person name="Quetier F."/>
            <person name="Town C.D."/>
            <person name="Roe B.A."/>
        </authorList>
    </citation>
    <scope>NUCLEOTIDE SEQUENCE [LARGE SCALE GENOMIC DNA]</scope>
    <source>
        <strain>cv. Jemalong A17</strain>
    </source>
</reference>
<reference key="2">
    <citation type="journal article" date="2014" name="BMC Genomics">
        <title>An improved genome release (version Mt4.0) for the model legume Medicago truncatula.</title>
        <authorList>
            <person name="Tang H."/>
            <person name="Krishnakumar V."/>
            <person name="Bidwell S."/>
            <person name="Rosen B."/>
            <person name="Chan A."/>
            <person name="Zhou S."/>
            <person name="Gentzbittel L."/>
            <person name="Childs K.L."/>
            <person name="Yandell M."/>
            <person name="Gundlach H."/>
            <person name="Mayer K.F."/>
            <person name="Schwartz D.C."/>
            <person name="Town C.D."/>
        </authorList>
    </citation>
    <scope>GENOME REANNOTATION</scope>
    <source>
        <strain>cv. Jemalong A17</strain>
    </source>
</reference>
<reference key="3">
    <citation type="journal article" date="2018" name="Nat. Plants">
        <title>Whole-genome landscape of Medicago truncatula symbiotic genes.</title>
        <authorList>
            <person name="Pecrix Y."/>
            <person name="Staton S.E."/>
            <person name="Sallet E."/>
            <person name="Lelandais-Briere C."/>
            <person name="Moreau S."/>
            <person name="Carrere S."/>
            <person name="Blein T."/>
            <person name="Jardinaud M.F."/>
            <person name="Latrasse D."/>
            <person name="Zouine M."/>
            <person name="Zahm M."/>
            <person name="Kreplak J."/>
            <person name="Mayjonade B."/>
            <person name="Satge C."/>
            <person name="Perez M."/>
            <person name="Cauet S."/>
            <person name="Marande W."/>
            <person name="Chantry-Darmon C."/>
            <person name="Lopez-Roques C."/>
            <person name="Bouchez O."/>
            <person name="Berard A."/>
            <person name="Debelle F."/>
            <person name="Munos S."/>
            <person name="Bendahmane A."/>
            <person name="Berges H."/>
            <person name="Niebel A."/>
            <person name="Buitink J."/>
            <person name="Frugier F."/>
            <person name="Benhamed M."/>
            <person name="Crespi M."/>
            <person name="Gouzy J."/>
            <person name="Gamas P."/>
        </authorList>
    </citation>
    <scope>NUCLEOTIDE SEQUENCE [LARGE SCALE GENOMIC DNA]</scope>
    <source>
        <strain>cv. Jemalong A17</strain>
        <tissue>Leaf</tissue>
    </source>
</reference>
<reference key="4">
    <citation type="journal article" date="2020" name="New Phytol.">
        <title>Medicago truncatula Phytoglobin 1.1 controls symbiotic nodulation and nitrogen fixation via the regulation of nitric oxide concentration.</title>
        <authorList>
            <person name="Berger A."/>
            <person name="Guinand S."/>
            <person name="Boscari A."/>
            <person name="Puppo A."/>
            <person name="Brouquisse R."/>
        </authorList>
    </citation>
    <scope>DEVELOPMENTAL STAGE</scope>
    <scope>REPRESSION BY NITRIC OXIDE</scope>
    <scope>GENE FAMILY</scope>
    <scope>NOMENCLATURE</scope>
    <source>
        <strain>cv. Jemalong A17</strain>
    </source>
</reference>
<proteinExistence type="evidence at transcript level"/>
<comment type="function">
    <text evidence="1 2">Hemoglobin-like protein that exhibits an unusual concentration-independent binding of O(2) and CO (By similarity). Required for general plant development and during nodulation (By similarity). May promote shoot organogenesis from root explants (By similarity).</text>
</comment>
<comment type="subunit">
    <text evidence="2">Homodimer when ferric.</text>
</comment>
<comment type="developmental stage">
    <text evidence="3">During root nodulation, accumulates progressively with highest levels at the onset of nodule senescence.</text>
</comment>
<comment type="induction">
    <text evidence="3">Down-regulated by nitric oxide (NO), particularly during nodulation mediated by Sinorhizobium meliloti inoculation.</text>
</comment>
<comment type="similarity">
    <text evidence="5">Belongs to the truncated hemoglobin family. Group II subfamily.</text>
</comment>